<gene>
    <name evidence="1" type="primary">cca</name>
    <name type="ordered locus">Reut_A0222</name>
</gene>
<accession>Q476S9</accession>
<comment type="function">
    <text evidence="1">Catalyzes the addition and repair of the essential 3'-terminal CCA sequence in tRNAs without using a nucleic acid template. Adds these three nucleotides in the order of C, C, and A to the tRNA nucleotide-73, using CTP and ATP as substrates and producing inorganic pyrophosphate. tRNA 3'-terminal CCA addition is required both for tRNA processing and repair. Also involved in tRNA surveillance by mediating tandem CCA addition to generate a CCACCA at the 3' terminus of unstable tRNAs. While stable tRNAs receive only 3'-terminal CCA, unstable tRNAs are marked with CCACCA and rapidly degraded.</text>
</comment>
<comment type="catalytic activity">
    <reaction evidence="1">
        <text>a tRNA precursor + 2 CTP + ATP = a tRNA with a 3' CCA end + 3 diphosphate</text>
        <dbReference type="Rhea" id="RHEA:14433"/>
        <dbReference type="Rhea" id="RHEA-COMP:10465"/>
        <dbReference type="Rhea" id="RHEA-COMP:10468"/>
        <dbReference type="ChEBI" id="CHEBI:30616"/>
        <dbReference type="ChEBI" id="CHEBI:33019"/>
        <dbReference type="ChEBI" id="CHEBI:37563"/>
        <dbReference type="ChEBI" id="CHEBI:74896"/>
        <dbReference type="ChEBI" id="CHEBI:83071"/>
        <dbReference type="EC" id="2.7.7.72"/>
    </reaction>
</comment>
<comment type="catalytic activity">
    <reaction evidence="1">
        <text>a tRNA with a 3' CCA end + 2 CTP + ATP = a tRNA with a 3' CCACCA end + 3 diphosphate</text>
        <dbReference type="Rhea" id="RHEA:76235"/>
        <dbReference type="Rhea" id="RHEA-COMP:10468"/>
        <dbReference type="Rhea" id="RHEA-COMP:18655"/>
        <dbReference type="ChEBI" id="CHEBI:30616"/>
        <dbReference type="ChEBI" id="CHEBI:33019"/>
        <dbReference type="ChEBI" id="CHEBI:37563"/>
        <dbReference type="ChEBI" id="CHEBI:83071"/>
        <dbReference type="ChEBI" id="CHEBI:195187"/>
    </reaction>
    <physiologicalReaction direction="left-to-right" evidence="1">
        <dbReference type="Rhea" id="RHEA:76236"/>
    </physiologicalReaction>
</comment>
<comment type="cofactor">
    <cofactor evidence="1">
        <name>Mg(2+)</name>
        <dbReference type="ChEBI" id="CHEBI:18420"/>
    </cofactor>
    <text evidence="1">Magnesium is required for nucleotidyltransferase activity.</text>
</comment>
<comment type="cofactor">
    <cofactor evidence="1">
        <name>Ni(2+)</name>
        <dbReference type="ChEBI" id="CHEBI:49786"/>
    </cofactor>
    <text evidence="1">Nickel for phosphatase activity.</text>
</comment>
<comment type="subunit">
    <text evidence="1">Monomer. Can also form homodimers and oligomers.</text>
</comment>
<comment type="domain">
    <text evidence="1">Comprises two domains: an N-terminal domain containing the nucleotidyltransferase activity and a C-terminal HD domain associated with both phosphodiesterase and phosphatase activities.</text>
</comment>
<comment type="miscellaneous">
    <text evidence="1">A single active site specifically recognizes both ATP and CTP and is responsible for their addition.</text>
</comment>
<comment type="similarity">
    <text evidence="1">Belongs to the tRNA nucleotidyltransferase/poly(A) polymerase family. Bacterial CCA-adding enzyme type 1 subfamily.</text>
</comment>
<keyword id="KW-0067">ATP-binding</keyword>
<keyword id="KW-0378">Hydrolase</keyword>
<keyword id="KW-0460">Magnesium</keyword>
<keyword id="KW-0479">Metal-binding</keyword>
<keyword id="KW-0511">Multifunctional enzyme</keyword>
<keyword id="KW-0533">Nickel</keyword>
<keyword id="KW-0547">Nucleotide-binding</keyword>
<keyword id="KW-0548">Nucleotidyltransferase</keyword>
<keyword id="KW-0692">RNA repair</keyword>
<keyword id="KW-0694">RNA-binding</keyword>
<keyword id="KW-0808">Transferase</keyword>
<keyword id="KW-0819">tRNA processing</keyword>
<sequence>MQVYAVGGAIRDELLGKPSQDRDYVVVGATPADMEAAGYKPVGKDFPVFLHPRTKEEYALARTERKTAMGYKGFAFYCEPDVTLDDDLVRRDLTINAMARAVDDDGKLVGPVIDPHGGQRDLAARQFRHVSEAFAEDPVRILRVARFAARFHDFTVAPETVALMRRMVDAGEVDALVPERVWQELARGLMEARPARMFEVLRQCGALARLLPELDRLWGVPQRADYHPEVDTGVHVMMVIDCAAAMGTTLAVRFAALVHDLGKGTTPEHVLPRHLGHETRSVELLEDVCKRLRVPNDCRDLAVVVAREHGNIHRSMEFGAAAITRLLERCDALRKPGRFADALLACEADKRGRKGFESDTYPQKARLLAALDAAASVDAGAIAKALADDVSKIRERVHEARVAAVDARLKQLADH</sequence>
<evidence type="ECO:0000255" key="1">
    <source>
        <dbReference type="HAMAP-Rule" id="MF_01261"/>
    </source>
</evidence>
<proteinExistence type="inferred from homology"/>
<dbReference type="EC" id="2.7.7.72" evidence="1"/>
<dbReference type="EC" id="3.1.3.-" evidence="1"/>
<dbReference type="EC" id="3.1.4.-" evidence="1"/>
<dbReference type="EMBL" id="CP000090">
    <property type="protein sequence ID" value="AAZ59604.1"/>
    <property type="molecule type" value="Genomic_DNA"/>
</dbReference>
<dbReference type="SMR" id="Q476S9"/>
<dbReference type="STRING" id="264198.Reut_A0222"/>
<dbReference type="KEGG" id="reu:Reut_A0222"/>
<dbReference type="eggNOG" id="COG0617">
    <property type="taxonomic scope" value="Bacteria"/>
</dbReference>
<dbReference type="HOGENOM" id="CLU_015961_1_1_4"/>
<dbReference type="OrthoDB" id="9805698at2"/>
<dbReference type="GO" id="GO:0005524">
    <property type="term" value="F:ATP binding"/>
    <property type="evidence" value="ECO:0007669"/>
    <property type="project" value="UniProtKB-UniRule"/>
</dbReference>
<dbReference type="GO" id="GO:0004810">
    <property type="term" value="F:CCA tRNA nucleotidyltransferase activity"/>
    <property type="evidence" value="ECO:0007669"/>
    <property type="project" value="UniProtKB-UniRule"/>
</dbReference>
<dbReference type="GO" id="GO:0004112">
    <property type="term" value="F:cyclic-nucleotide phosphodiesterase activity"/>
    <property type="evidence" value="ECO:0007669"/>
    <property type="project" value="UniProtKB-UniRule"/>
</dbReference>
<dbReference type="GO" id="GO:0000287">
    <property type="term" value="F:magnesium ion binding"/>
    <property type="evidence" value="ECO:0007669"/>
    <property type="project" value="UniProtKB-UniRule"/>
</dbReference>
<dbReference type="GO" id="GO:0016791">
    <property type="term" value="F:phosphatase activity"/>
    <property type="evidence" value="ECO:0007669"/>
    <property type="project" value="UniProtKB-UniRule"/>
</dbReference>
<dbReference type="GO" id="GO:0000049">
    <property type="term" value="F:tRNA binding"/>
    <property type="evidence" value="ECO:0007669"/>
    <property type="project" value="UniProtKB-UniRule"/>
</dbReference>
<dbReference type="GO" id="GO:0042245">
    <property type="term" value="P:RNA repair"/>
    <property type="evidence" value="ECO:0007669"/>
    <property type="project" value="UniProtKB-KW"/>
</dbReference>
<dbReference type="GO" id="GO:0001680">
    <property type="term" value="P:tRNA 3'-terminal CCA addition"/>
    <property type="evidence" value="ECO:0007669"/>
    <property type="project" value="UniProtKB-UniRule"/>
</dbReference>
<dbReference type="CDD" id="cd00077">
    <property type="entry name" value="HDc"/>
    <property type="match status" value="1"/>
</dbReference>
<dbReference type="CDD" id="cd05398">
    <property type="entry name" value="NT_ClassII-CCAase"/>
    <property type="match status" value="1"/>
</dbReference>
<dbReference type="Gene3D" id="3.30.460.10">
    <property type="entry name" value="Beta Polymerase, domain 2"/>
    <property type="match status" value="1"/>
</dbReference>
<dbReference type="Gene3D" id="1.10.3090.10">
    <property type="entry name" value="cca-adding enzyme, domain 2"/>
    <property type="match status" value="1"/>
</dbReference>
<dbReference type="HAMAP" id="MF_01261">
    <property type="entry name" value="CCA_bact_type1"/>
    <property type="match status" value="1"/>
</dbReference>
<dbReference type="InterPro" id="IPR012006">
    <property type="entry name" value="CCA_bact"/>
</dbReference>
<dbReference type="InterPro" id="IPR003607">
    <property type="entry name" value="HD/PDEase_dom"/>
</dbReference>
<dbReference type="InterPro" id="IPR006674">
    <property type="entry name" value="HD_domain"/>
</dbReference>
<dbReference type="InterPro" id="IPR043519">
    <property type="entry name" value="NT_sf"/>
</dbReference>
<dbReference type="InterPro" id="IPR002646">
    <property type="entry name" value="PolA_pol_head_dom"/>
</dbReference>
<dbReference type="InterPro" id="IPR032828">
    <property type="entry name" value="PolyA_RNA-bd"/>
</dbReference>
<dbReference type="InterPro" id="IPR050124">
    <property type="entry name" value="tRNA_CCA-adding_enzyme"/>
</dbReference>
<dbReference type="NCBIfam" id="NF008137">
    <property type="entry name" value="PRK10885.1"/>
    <property type="match status" value="1"/>
</dbReference>
<dbReference type="PANTHER" id="PTHR47545">
    <property type="entry name" value="MULTIFUNCTIONAL CCA PROTEIN"/>
    <property type="match status" value="1"/>
</dbReference>
<dbReference type="PANTHER" id="PTHR47545:SF1">
    <property type="entry name" value="MULTIFUNCTIONAL CCA PROTEIN"/>
    <property type="match status" value="1"/>
</dbReference>
<dbReference type="Pfam" id="PF01966">
    <property type="entry name" value="HD"/>
    <property type="match status" value="1"/>
</dbReference>
<dbReference type="Pfam" id="PF01743">
    <property type="entry name" value="PolyA_pol"/>
    <property type="match status" value="1"/>
</dbReference>
<dbReference type="Pfam" id="PF12627">
    <property type="entry name" value="PolyA_pol_RNAbd"/>
    <property type="match status" value="1"/>
</dbReference>
<dbReference type="PIRSF" id="PIRSF000813">
    <property type="entry name" value="CCA_bact"/>
    <property type="match status" value="1"/>
</dbReference>
<dbReference type="SUPFAM" id="SSF81301">
    <property type="entry name" value="Nucleotidyltransferase"/>
    <property type="match status" value="1"/>
</dbReference>
<dbReference type="SUPFAM" id="SSF81891">
    <property type="entry name" value="Poly A polymerase C-terminal region-like"/>
    <property type="match status" value="1"/>
</dbReference>
<dbReference type="PROSITE" id="PS51831">
    <property type="entry name" value="HD"/>
    <property type="match status" value="1"/>
</dbReference>
<reference key="1">
    <citation type="journal article" date="2010" name="PLoS ONE">
        <title>The complete multipartite genome sequence of Cupriavidus necator JMP134, a versatile pollutant degrader.</title>
        <authorList>
            <person name="Lykidis A."/>
            <person name="Perez-Pantoja D."/>
            <person name="Ledger T."/>
            <person name="Mavromatis K."/>
            <person name="Anderson I.J."/>
            <person name="Ivanova N.N."/>
            <person name="Hooper S.D."/>
            <person name="Lapidus A."/>
            <person name="Lucas S."/>
            <person name="Gonzalez B."/>
            <person name="Kyrpides N.C."/>
        </authorList>
    </citation>
    <scope>NUCLEOTIDE SEQUENCE [LARGE SCALE GENOMIC DNA]</scope>
    <source>
        <strain>JMP134 / LMG 1197</strain>
    </source>
</reference>
<organism>
    <name type="scientific">Cupriavidus pinatubonensis (strain JMP 134 / LMG 1197)</name>
    <name type="common">Cupriavidus necator (strain JMP 134)</name>
    <dbReference type="NCBI Taxonomy" id="264198"/>
    <lineage>
        <taxon>Bacteria</taxon>
        <taxon>Pseudomonadati</taxon>
        <taxon>Pseudomonadota</taxon>
        <taxon>Betaproteobacteria</taxon>
        <taxon>Burkholderiales</taxon>
        <taxon>Burkholderiaceae</taxon>
        <taxon>Cupriavidus</taxon>
    </lineage>
</organism>
<name>CCA_CUPPJ</name>
<feature type="chain" id="PRO_1000054289" description="Multifunctional CCA protein">
    <location>
        <begin position="1"/>
        <end position="415"/>
    </location>
</feature>
<feature type="domain" description="HD" evidence="1">
    <location>
        <begin position="232"/>
        <end position="333"/>
    </location>
</feature>
<feature type="binding site" evidence="1">
    <location>
        <position position="8"/>
    </location>
    <ligand>
        <name>ATP</name>
        <dbReference type="ChEBI" id="CHEBI:30616"/>
    </ligand>
</feature>
<feature type="binding site" evidence="1">
    <location>
        <position position="8"/>
    </location>
    <ligand>
        <name>CTP</name>
        <dbReference type="ChEBI" id="CHEBI:37563"/>
    </ligand>
</feature>
<feature type="binding site" evidence="1">
    <location>
        <position position="11"/>
    </location>
    <ligand>
        <name>ATP</name>
        <dbReference type="ChEBI" id="CHEBI:30616"/>
    </ligand>
</feature>
<feature type="binding site" evidence="1">
    <location>
        <position position="11"/>
    </location>
    <ligand>
        <name>CTP</name>
        <dbReference type="ChEBI" id="CHEBI:37563"/>
    </ligand>
</feature>
<feature type="binding site" evidence="1">
    <location>
        <position position="21"/>
    </location>
    <ligand>
        <name>Mg(2+)</name>
        <dbReference type="ChEBI" id="CHEBI:18420"/>
    </ligand>
</feature>
<feature type="binding site" evidence="1">
    <location>
        <position position="23"/>
    </location>
    <ligand>
        <name>Mg(2+)</name>
        <dbReference type="ChEBI" id="CHEBI:18420"/>
    </ligand>
</feature>
<feature type="binding site" evidence="1">
    <location>
        <position position="91"/>
    </location>
    <ligand>
        <name>ATP</name>
        <dbReference type="ChEBI" id="CHEBI:30616"/>
    </ligand>
</feature>
<feature type="binding site" evidence="1">
    <location>
        <position position="91"/>
    </location>
    <ligand>
        <name>CTP</name>
        <dbReference type="ChEBI" id="CHEBI:37563"/>
    </ligand>
</feature>
<feature type="binding site" evidence="1">
    <location>
        <position position="143"/>
    </location>
    <ligand>
        <name>ATP</name>
        <dbReference type="ChEBI" id="CHEBI:30616"/>
    </ligand>
</feature>
<feature type="binding site" evidence="1">
    <location>
        <position position="143"/>
    </location>
    <ligand>
        <name>CTP</name>
        <dbReference type="ChEBI" id="CHEBI:37563"/>
    </ligand>
</feature>
<feature type="binding site" evidence="1">
    <location>
        <position position="146"/>
    </location>
    <ligand>
        <name>ATP</name>
        <dbReference type="ChEBI" id="CHEBI:30616"/>
    </ligand>
</feature>
<feature type="binding site" evidence="1">
    <location>
        <position position="146"/>
    </location>
    <ligand>
        <name>CTP</name>
        <dbReference type="ChEBI" id="CHEBI:37563"/>
    </ligand>
</feature>
<protein>
    <recommendedName>
        <fullName evidence="1">Multifunctional CCA protein</fullName>
    </recommendedName>
    <domain>
        <recommendedName>
            <fullName evidence="1">CCA-adding enzyme</fullName>
            <ecNumber evidence="1">2.7.7.72</ecNumber>
        </recommendedName>
        <alternativeName>
            <fullName evidence="1">CCA tRNA nucleotidyltransferase</fullName>
        </alternativeName>
        <alternativeName>
            <fullName evidence="1">tRNA CCA-pyrophosphorylase</fullName>
        </alternativeName>
        <alternativeName>
            <fullName evidence="1">tRNA adenylyl-/cytidylyl-transferase</fullName>
        </alternativeName>
        <alternativeName>
            <fullName evidence="1">tRNA nucleotidyltransferase</fullName>
        </alternativeName>
        <alternativeName>
            <fullName evidence="1">tRNA-NT</fullName>
        </alternativeName>
    </domain>
    <domain>
        <recommendedName>
            <fullName evidence="1">2'-nucleotidase</fullName>
            <ecNumber evidence="1">3.1.3.-</ecNumber>
        </recommendedName>
    </domain>
    <domain>
        <recommendedName>
            <fullName evidence="1">2',3'-cyclic phosphodiesterase</fullName>
            <ecNumber evidence="1">3.1.4.-</ecNumber>
        </recommendedName>
    </domain>
    <domain>
        <recommendedName>
            <fullName evidence="1">Phosphatase</fullName>
            <ecNumber evidence="1">3.1.3.-</ecNumber>
        </recommendedName>
    </domain>
</protein>